<feature type="signal peptide" evidence="4">
    <location>
        <begin position="1"/>
        <end position="17"/>
    </location>
</feature>
<feature type="chain" id="PRO_0000023909" description="Peptidoglycan-recognition protein SB2">
    <location>
        <begin position="18"/>
        <end position="182"/>
    </location>
</feature>
<feature type="domain" description="N-acetylmuramoyl-L-alanine amidase" evidence="4">
    <location>
        <begin position="40"/>
        <end position="165"/>
    </location>
</feature>
<feature type="binding site" evidence="3">
    <location>
        <position position="47"/>
    </location>
    <ligand>
        <name>Zn(2+)</name>
        <dbReference type="ChEBI" id="CHEBI:29105"/>
    </ligand>
</feature>
<feature type="binding site" evidence="3">
    <location>
        <position position="155"/>
    </location>
    <ligand>
        <name>Zn(2+)</name>
        <dbReference type="ChEBI" id="CHEBI:29105"/>
    </ligand>
</feature>
<feature type="binding site" evidence="3">
    <location>
        <position position="163"/>
    </location>
    <ligand>
        <name>Zn(2+)</name>
        <dbReference type="ChEBI" id="CHEBI:29105"/>
    </ligand>
</feature>
<feature type="site" description="Important for catalytic activity; essential for amidase activity and zinc hydrate coordination" evidence="2">
    <location>
        <position position="81"/>
    </location>
</feature>
<feature type="glycosylation site" description="N-linked (GlcNAc...) asparagine" evidence="4">
    <location>
        <position position="149"/>
    </location>
</feature>
<feature type="disulfide bond" evidence="1">
    <location>
        <begin position="54"/>
        <end position="60"/>
    </location>
</feature>
<evidence type="ECO:0000250" key="1"/>
<evidence type="ECO:0000250" key="2">
    <source>
        <dbReference type="UniProtKB" id="P00806"/>
    </source>
</evidence>
<evidence type="ECO:0000250" key="3">
    <source>
        <dbReference type="UniProtKB" id="Q8INK6"/>
    </source>
</evidence>
<evidence type="ECO:0000255" key="4"/>
<evidence type="ECO:0000305" key="5"/>
<gene>
    <name type="primary">PGRP-SB2</name>
</gene>
<organism>
    <name type="scientific">Drosophila simulans</name>
    <name type="common">Fruit fly</name>
    <dbReference type="NCBI Taxonomy" id="7240"/>
    <lineage>
        <taxon>Eukaryota</taxon>
        <taxon>Metazoa</taxon>
        <taxon>Ecdysozoa</taxon>
        <taxon>Arthropoda</taxon>
        <taxon>Hexapoda</taxon>
        <taxon>Insecta</taxon>
        <taxon>Pterygota</taxon>
        <taxon>Neoptera</taxon>
        <taxon>Endopterygota</taxon>
        <taxon>Diptera</taxon>
        <taxon>Brachycera</taxon>
        <taxon>Muscomorpha</taxon>
        <taxon>Ephydroidea</taxon>
        <taxon>Drosophilidae</taxon>
        <taxon>Drosophila</taxon>
        <taxon>Sophophora</taxon>
    </lineage>
</organism>
<dbReference type="EC" id="3.5.1.28"/>
<dbReference type="EMBL" id="AJ556586">
    <property type="protein sequence ID" value="CAD89151.1"/>
    <property type="molecule type" value="Genomic_DNA"/>
</dbReference>
<dbReference type="SMR" id="Q70PW6"/>
<dbReference type="GlyCosmos" id="Q70PW6">
    <property type="glycosylation" value="1 site, No reported glycans"/>
</dbReference>
<dbReference type="OrthoDB" id="10001926at2759"/>
<dbReference type="GO" id="GO:0005576">
    <property type="term" value="C:extracellular region"/>
    <property type="evidence" value="ECO:0000250"/>
    <property type="project" value="UniProtKB"/>
</dbReference>
<dbReference type="GO" id="GO:0008745">
    <property type="term" value="F:N-acetylmuramoyl-L-alanine amidase activity"/>
    <property type="evidence" value="ECO:0007669"/>
    <property type="project" value="UniProtKB-EC"/>
</dbReference>
<dbReference type="GO" id="GO:0042834">
    <property type="term" value="F:peptidoglycan binding"/>
    <property type="evidence" value="ECO:0007669"/>
    <property type="project" value="InterPro"/>
</dbReference>
<dbReference type="GO" id="GO:0008270">
    <property type="term" value="F:zinc ion binding"/>
    <property type="evidence" value="ECO:0007669"/>
    <property type="project" value="InterPro"/>
</dbReference>
<dbReference type="GO" id="GO:0045087">
    <property type="term" value="P:innate immune response"/>
    <property type="evidence" value="ECO:0007669"/>
    <property type="project" value="UniProtKB-KW"/>
</dbReference>
<dbReference type="GO" id="GO:0009253">
    <property type="term" value="P:peptidoglycan catabolic process"/>
    <property type="evidence" value="ECO:0007669"/>
    <property type="project" value="InterPro"/>
</dbReference>
<dbReference type="CDD" id="cd06583">
    <property type="entry name" value="PGRP"/>
    <property type="match status" value="1"/>
</dbReference>
<dbReference type="FunFam" id="3.40.80.10:FF:000001">
    <property type="entry name" value="Peptidoglycan recognition protein 1"/>
    <property type="match status" value="1"/>
</dbReference>
<dbReference type="Gene3D" id="3.40.80.10">
    <property type="entry name" value="Peptidoglycan recognition protein-like"/>
    <property type="match status" value="1"/>
</dbReference>
<dbReference type="InterPro" id="IPR036505">
    <property type="entry name" value="Amidase/PGRP_sf"/>
</dbReference>
<dbReference type="InterPro" id="IPR002502">
    <property type="entry name" value="Amidase_domain"/>
</dbReference>
<dbReference type="InterPro" id="IPR017331">
    <property type="entry name" value="Peptidoglycan_recognition"/>
</dbReference>
<dbReference type="InterPro" id="IPR015510">
    <property type="entry name" value="PGRP"/>
</dbReference>
<dbReference type="InterPro" id="IPR006619">
    <property type="entry name" value="PGRP_domain_met/bac"/>
</dbReference>
<dbReference type="PANTHER" id="PTHR11022">
    <property type="entry name" value="PEPTIDOGLYCAN RECOGNITION PROTEIN"/>
    <property type="match status" value="1"/>
</dbReference>
<dbReference type="PANTHER" id="PTHR11022:SF75">
    <property type="entry name" value="PEPTIDOGLYCAN-RECOGNITION PROTEIN SB1-RELATED"/>
    <property type="match status" value="1"/>
</dbReference>
<dbReference type="Pfam" id="PF01510">
    <property type="entry name" value="Amidase_2"/>
    <property type="match status" value="1"/>
</dbReference>
<dbReference type="PIRSF" id="PIRSF037945">
    <property type="entry name" value="PGRPs"/>
    <property type="match status" value="1"/>
</dbReference>
<dbReference type="SMART" id="SM00644">
    <property type="entry name" value="Ami_2"/>
    <property type="match status" value="1"/>
</dbReference>
<dbReference type="SMART" id="SM00701">
    <property type="entry name" value="PGRP"/>
    <property type="match status" value="1"/>
</dbReference>
<dbReference type="SUPFAM" id="SSF55846">
    <property type="entry name" value="N-acetylmuramoyl-L-alanine amidase-like"/>
    <property type="match status" value="1"/>
</dbReference>
<sequence length="182" mass="20512">MKLQLALVLCGLTLALGQIVPRSSWCPVPISPRIPRLMVPVRLIIIHHTVTAPCFNPHQCQLVLRQIRADHMRRKFRDIGYNFLIGGDGRIYEGLGFGIRGEHAPRYNSQSIGIAFIGNFQTGLPPSQMLQAARTLIQIAVQRRQVSPNYSLVGHCQTKATACPGRHLLNELKKWPRWQPKP</sequence>
<proteinExistence type="inferred from homology"/>
<comment type="function">
    <text evidence="1">N-acetylmuramyl-L-alanine amidase involved in innate immunity by degrading bacterial peptidoglycans (PGN). Probably plays a scavenger role by digesting biologically active PGN into biologically inactive fragments. Has no direct bacteriolytic activity (By similarity).</text>
</comment>
<comment type="catalytic activity">
    <reaction>
        <text>Hydrolyzes the link between N-acetylmuramoyl residues and L-amino acid residues in certain cell-wall glycopeptides.</text>
        <dbReference type="EC" id="3.5.1.28"/>
    </reaction>
</comment>
<comment type="cofactor">
    <cofactor evidence="3">
        <name>Zn(2+)</name>
        <dbReference type="ChEBI" id="CHEBI:29105"/>
    </cofactor>
</comment>
<comment type="subcellular location">
    <subcellularLocation>
        <location evidence="5">Secreted</location>
    </subcellularLocation>
</comment>
<comment type="similarity">
    <text evidence="5">Belongs to the N-acetylmuramoyl-L-alanine amidase 2 family.</text>
</comment>
<protein>
    <recommendedName>
        <fullName>Peptidoglycan-recognition protein SB2</fullName>
        <ecNumber>3.5.1.28</ecNumber>
    </recommendedName>
</protein>
<name>PGSB2_DROSI</name>
<keyword id="KW-1015">Disulfide bond</keyword>
<keyword id="KW-0325">Glycoprotein</keyword>
<keyword id="KW-0378">Hydrolase</keyword>
<keyword id="KW-0391">Immunity</keyword>
<keyword id="KW-0399">Innate immunity</keyword>
<keyword id="KW-0479">Metal-binding</keyword>
<keyword id="KW-0964">Secreted</keyword>
<keyword id="KW-0732">Signal</keyword>
<keyword id="KW-0862">Zinc</keyword>
<accession>Q70PW6</accession>
<reference key="1">
    <citation type="journal article" date="2003" name="J. Mol. Evol.">
        <title>The evolution of parasite recognition genes in the innate immune system: purifying selection on Drosophila melanogaster peptidoglycan recognition proteins.</title>
        <authorList>
            <person name="Jiggins F.M."/>
            <person name="Hurst G.D.D."/>
        </authorList>
    </citation>
    <scope>NUCLEOTIDE SEQUENCE [GENOMIC DNA]</scope>
</reference>